<proteinExistence type="inferred from homology"/>
<name>SEY1_CRYNB</name>
<protein>
    <recommendedName>
        <fullName evidence="1">Protein SEY1</fullName>
        <ecNumber evidence="1">3.6.5.-</ecNumber>
    </recommendedName>
</protein>
<comment type="function">
    <text evidence="1">Cooperates with the reticulon proteins and tubule-shaping DP1 family proteins to generate and maintain the structure of the tubular endoplasmic reticulum network. Has GTPase activity, which is required for its function in ER organization.</text>
</comment>
<comment type="subcellular location">
    <subcellularLocation>
        <location evidence="1">Endoplasmic reticulum membrane</location>
        <topology evidence="1">Multi-pass membrane protein</topology>
    </subcellularLocation>
    <text evidence="1">Enriched in the cortical ER. Concentrated in punctae along the ER tubules.</text>
</comment>
<comment type="similarity">
    <text evidence="2">Belongs to the TRAFAC class dynamin-like GTPase superfamily. GB1/RHD3 GTPase family. RHD3 subfamily.</text>
</comment>
<keyword id="KW-0175">Coiled coil</keyword>
<keyword id="KW-0256">Endoplasmic reticulum</keyword>
<keyword id="KW-0342">GTP-binding</keyword>
<keyword id="KW-0378">Hydrolase</keyword>
<keyword id="KW-0472">Membrane</keyword>
<keyword id="KW-0547">Nucleotide-binding</keyword>
<keyword id="KW-0812">Transmembrane</keyword>
<keyword id="KW-1133">Transmembrane helix</keyword>
<dbReference type="EC" id="3.6.5.-" evidence="1"/>
<dbReference type="EMBL" id="AAEY01000044">
    <property type="protein sequence ID" value="EAL18926.1"/>
    <property type="molecule type" value="Genomic_DNA"/>
</dbReference>
<dbReference type="RefSeq" id="XP_773573.1">
    <property type="nucleotide sequence ID" value="XM_768480.1"/>
</dbReference>
<dbReference type="SMR" id="P0CQ47"/>
<dbReference type="EnsemblFungi" id="AAW46519">
    <property type="protein sequence ID" value="AAW46519"/>
    <property type="gene ID" value="CNL04960"/>
</dbReference>
<dbReference type="GeneID" id="4938147"/>
<dbReference type="KEGG" id="cnb:CNBI1870"/>
<dbReference type="VEuPathDB" id="FungiDB:CNBI1870"/>
<dbReference type="HOGENOM" id="CLU_011270_0_0_1"/>
<dbReference type="OrthoDB" id="3728at5206"/>
<dbReference type="GO" id="GO:0005789">
    <property type="term" value="C:endoplasmic reticulum membrane"/>
    <property type="evidence" value="ECO:0007669"/>
    <property type="project" value="UniProtKB-SubCell"/>
</dbReference>
<dbReference type="GO" id="GO:0005525">
    <property type="term" value="F:GTP binding"/>
    <property type="evidence" value="ECO:0007669"/>
    <property type="project" value="UniProtKB-UniRule"/>
</dbReference>
<dbReference type="GO" id="GO:0003924">
    <property type="term" value="F:GTPase activity"/>
    <property type="evidence" value="ECO:0007669"/>
    <property type="project" value="UniProtKB-UniRule"/>
</dbReference>
<dbReference type="GO" id="GO:0016320">
    <property type="term" value="P:endoplasmic reticulum membrane fusion"/>
    <property type="evidence" value="ECO:0007669"/>
    <property type="project" value="TreeGrafter"/>
</dbReference>
<dbReference type="CDD" id="cd01851">
    <property type="entry name" value="GBP"/>
    <property type="match status" value="1"/>
</dbReference>
<dbReference type="FunFam" id="3.40.50.300:FF:000727">
    <property type="entry name" value="Protein SEY1 homolog"/>
    <property type="match status" value="1"/>
</dbReference>
<dbReference type="Gene3D" id="3.40.50.300">
    <property type="entry name" value="P-loop containing nucleotide triphosphate hydrolases"/>
    <property type="match status" value="1"/>
</dbReference>
<dbReference type="HAMAP" id="MF_03109">
    <property type="entry name" value="Sey1"/>
    <property type="match status" value="1"/>
</dbReference>
<dbReference type="InterPro" id="IPR030386">
    <property type="entry name" value="G_GB1_RHD3_dom"/>
</dbReference>
<dbReference type="InterPro" id="IPR027417">
    <property type="entry name" value="P-loop_NTPase"/>
</dbReference>
<dbReference type="InterPro" id="IPR008803">
    <property type="entry name" value="RHD3/Sey1"/>
</dbReference>
<dbReference type="InterPro" id="IPR046758">
    <property type="entry name" value="Sey1/RHD3-like_3HB"/>
</dbReference>
<dbReference type="PANTHER" id="PTHR45923">
    <property type="entry name" value="PROTEIN SEY1"/>
    <property type="match status" value="1"/>
</dbReference>
<dbReference type="PANTHER" id="PTHR45923:SF2">
    <property type="entry name" value="PROTEIN SEY1"/>
    <property type="match status" value="1"/>
</dbReference>
<dbReference type="Pfam" id="PF05879">
    <property type="entry name" value="RHD3_GTPase"/>
    <property type="match status" value="1"/>
</dbReference>
<dbReference type="Pfam" id="PF20428">
    <property type="entry name" value="Sey1_3HB"/>
    <property type="match status" value="1"/>
</dbReference>
<dbReference type="SUPFAM" id="SSF52540">
    <property type="entry name" value="P-loop containing nucleoside triphosphate hydrolases"/>
    <property type="match status" value="1"/>
</dbReference>
<dbReference type="PROSITE" id="PS51715">
    <property type="entry name" value="G_GB1_RHD3"/>
    <property type="match status" value="1"/>
</dbReference>
<gene>
    <name evidence="1" type="primary">SEY1</name>
    <name type="ordered locus">CNBI1870</name>
</gene>
<accession>P0CQ47</accession>
<accession>Q55M25</accession>
<accession>Q5K8P4</accession>
<sequence>MNQTPQIAQDLLKNPPQELQQLLNDPRTPDSARKAVQELQAPFVGPGTAGNKDGAKESPRLQIVNENQEFTKELSPYLAKWDLLDKGFAYDVVAVFGSQSTGKSTLLNRLFGTTFDVMDESKRQQTTKGIWMCPSQYSNTLVMDVEGTDGRERGEDQDFERKSALFSLASTEVLIVNLWEHQIGLYNGANMGLLKTVFEVNLGLFGGGGDNTKPKPQEKTLILFVIRDHVGATPMSNLTATLTQDMERIWDSLSKPAHLEDAVLSSYFDLSFAALPHKVLMPEKFEEAVLELRQRFTDRSREDYVFQPAYHKRIPADGVSFYMEGIWQQVLTNKDLDLPTQQELLAQFRCDEISTVVFEAFLASAKIVRRPVEAGSVVEGLGALMRDWLETALGKFDRDASRYHSAVYQRKRLDLLASLHASLSPLFLGQLKNLHKIETAKFSKDIVAGVKEPGYDFGVVVEEGKRRARERFLAGAKEVKVEETDWEYEHELALLDEDLKLIADKCRADETKKMVNAIERNVKRQILEPVEVAMSQPTKTMWDTVLKTYSDVIEAAEEAYLSKAKSYNCSDEENSTALASLRARAWLALRRKLEEQTSDSTVLTTLRTKFEDSFRYDEAGVPRVWRPEDDIEAAFRKAKDETLGLLPLFANIAPTEGSLLPELPPPEPSFDVESDPSPFDPSTAFTLLTATKLLSLESRFKRDADAAYVEAKRSMVSSVAQIPVWMYGVLVVLGWNEAMAVLFNPLYFAMLLVLAASGYIILQLGLAGPILQIASTVIREIRQMVVKKLREAFADVPEAQRILAQPVTASSSDEQERKGDLIKGEMLEK</sequence>
<feature type="chain" id="PRO_0000410234" description="Protein SEY1">
    <location>
        <begin position="1"/>
        <end position="829"/>
    </location>
</feature>
<feature type="topological domain" description="Cytoplasmic" evidence="1">
    <location>
        <begin position="1"/>
        <end position="721"/>
    </location>
</feature>
<feature type="transmembrane region" description="Helical" evidence="1">
    <location>
        <begin position="722"/>
        <end position="742"/>
    </location>
</feature>
<feature type="topological domain" description="Lumenal" evidence="1">
    <location>
        <begin position="743"/>
        <end position="745"/>
    </location>
</feature>
<feature type="transmembrane region" description="Helical" evidence="1">
    <location>
        <begin position="746"/>
        <end position="766"/>
    </location>
</feature>
<feature type="topological domain" description="Cytoplasmic" evidence="1">
    <location>
        <begin position="767"/>
        <end position="829"/>
    </location>
</feature>
<feature type="domain" description="GB1/RHD3-type G" evidence="2">
    <location>
        <begin position="87"/>
        <end position="310"/>
    </location>
</feature>
<feature type="region of interest" description="Disordered" evidence="3">
    <location>
        <begin position="806"/>
        <end position="829"/>
    </location>
</feature>
<feature type="coiled-coil region" evidence="1">
    <location>
        <begin position="487"/>
        <end position="525"/>
    </location>
</feature>
<feature type="compositionally biased region" description="Basic and acidic residues" evidence="3">
    <location>
        <begin position="814"/>
        <end position="829"/>
    </location>
</feature>
<feature type="binding site" evidence="1">
    <location>
        <begin position="97"/>
        <end position="104"/>
    </location>
    <ligand>
        <name>GTP</name>
        <dbReference type="ChEBI" id="CHEBI:37565"/>
    </ligand>
</feature>
<reference key="1">
    <citation type="journal article" date="2005" name="Science">
        <title>The genome of the basidiomycetous yeast and human pathogen Cryptococcus neoformans.</title>
        <authorList>
            <person name="Loftus B.J."/>
            <person name="Fung E."/>
            <person name="Roncaglia P."/>
            <person name="Rowley D."/>
            <person name="Amedeo P."/>
            <person name="Bruno D."/>
            <person name="Vamathevan J."/>
            <person name="Miranda M."/>
            <person name="Anderson I.J."/>
            <person name="Fraser J.A."/>
            <person name="Allen J.E."/>
            <person name="Bosdet I.E."/>
            <person name="Brent M.R."/>
            <person name="Chiu R."/>
            <person name="Doering T.L."/>
            <person name="Donlin M.J."/>
            <person name="D'Souza C.A."/>
            <person name="Fox D.S."/>
            <person name="Grinberg V."/>
            <person name="Fu J."/>
            <person name="Fukushima M."/>
            <person name="Haas B.J."/>
            <person name="Huang J.C."/>
            <person name="Janbon G."/>
            <person name="Jones S.J.M."/>
            <person name="Koo H.L."/>
            <person name="Krzywinski M.I."/>
            <person name="Kwon-Chung K.J."/>
            <person name="Lengeler K.B."/>
            <person name="Maiti R."/>
            <person name="Marra M.A."/>
            <person name="Marra R.E."/>
            <person name="Mathewson C.A."/>
            <person name="Mitchell T.G."/>
            <person name="Pertea M."/>
            <person name="Riggs F.R."/>
            <person name="Salzberg S.L."/>
            <person name="Schein J.E."/>
            <person name="Shvartsbeyn A."/>
            <person name="Shin H."/>
            <person name="Shumway M."/>
            <person name="Specht C.A."/>
            <person name="Suh B.B."/>
            <person name="Tenney A."/>
            <person name="Utterback T.R."/>
            <person name="Wickes B.L."/>
            <person name="Wortman J.R."/>
            <person name="Wye N.H."/>
            <person name="Kronstad J.W."/>
            <person name="Lodge J.K."/>
            <person name="Heitman J."/>
            <person name="Davis R.W."/>
            <person name="Fraser C.M."/>
            <person name="Hyman R.W."/>
        </authorList>
    </citation>
    <scope>NUCLEOTIDE SEQUENCE [LARGE SCALE GENOMIC DNA]</scope>
    <source>
        <strain>B-3501A</strain>
    </source>
</reference>
<evidence type="ECO:0000255" key="1">
    <source>
        <dbReference type="HAMAP-Rule" id="MF_03109"/>
    </source>
</evidence>
<evidence type="ECO:0000255" key="2">
    <source>
        <dbReference type="PROSITE-ProRule" id="PRU01052"/>
    </source>
</evidence>
<evidence type="ECO:0000256" key="3">
    <source>
        <dbReference type="SAM" id="MobiDB-lite"/>
    </source>
</evidence>
<organism>
    <name type="scientific">Cryptococcus neoformans var. neoformans serotype D (strain B-3501A)</name>
    <name type="common">Filobasidiella neoformans</name>
    <dbReference type="NCBI Taxonomy" id="283643"/>
    <lineage>
        <taxon>Eukaryota</taxon>
        <taxon>Fungi</taxon>
        <taxon>Dikarya</taxon>
        <taxon>Basidiomycota</taxon>
        <taxon>Agaricomycotina</taxon>
        <taxon>Tremellomycetes</taxon>
        <taxon>Tremellales</taxon>
        <taxon>Cryptococcaceae</taxon>
        <taxon>Cryptococcus</taxon>
        <taxon>Cryptococcus neoformans species complex</taxon>
    </lineage>
</organism>